<proteinExistence type="inferred from homology"/>
<accession>Q3JZ18</accession>
<evidence type="ECO:0000255" key="1">
    <source>
        <dbReference type="HAMAP-Rule" id="MF_01555"/>
    </source>
</evidence>
<sequence length="141" mass="15315">MTIIIGADAHGVELKEVIRQHLTSLGKEIIDLTDTSKDFVDNTLAIVAKVNQKEDNLGIMVDAYGVGPFMVATKVKGMIAAEVSDERSAYMTRAHNNARMITLGSEIVGPGVAKHIVEGFVDGTYDAGRHQIRVDMLNKMC</sequence>
<feature type="chain" id="PRO_0000208115" description="Galactose-6-phosphate isomerase subunit LacA">
    <location>
        <begin position="1"/>
        <end position="141"/>
    </location>
</feature>
<dbReference type="EC" id="5.3.1.26" evidence="1"/>
<dbReference type="EMBL" id="CP000114">
    <property type="protein sequence ID" value="ABA44592.1"/>
    <property type="molecule type" value="Genomic_DNA"/>
</dbReference>
<dbReference type="RefSeq" id="WP_000152527.1">
    <property type="nucleotide sequence ID" value="NC_007432.1"/>
</dbReference>
<dbReference type="SMR" id="Q3JZ18"/>
<dbReference type="KEGG" id="sak:SAK_1890"/>
<dbReference type="HOGENOM" id="CLU_091396_4_2_9"/>
<dbReference type="UniPathway" id="UPA00702">
    <property type="reaction ID" value="UER00714"/>
</dbReference>
<dbReference type="GO" id="GO:0050044">
    <property type="term" value="F:galactose-6-phosphate isomerase activity"/>
    <property type="evidence" value="ECO:0007669"/>
    <property type="project" value="UniProtKB-UniRule"/>
</dbReference>
<dbReference type="GO" id="GO:0004751">
    <property type="term" value="F:ribose-5-phosphate isomerase activity"/>
    <property type="evidence" value="ECO:0007669"/>
    <property type="project" value="TreeGrafter"/>
</dbReference>
<dbReference type="GO" id="GO:0019316">
    <property type="term" value="P:D-allose catabolic process"/>
    <property type="evidence" value="ECO:0007669"/>
    <property type="project" value="TreeGrafter"/>
</dbReference>
<dbReference type="GO" id="GO:0019388">
    <property type="term" value="P:galactose catabolic process"/>
    <property type="evidence" value="ECO:0007669"/>
    <property type="project" value="UniProtKB-UniPathway"/>
</dbReference>
<dbReference type="GO" id="GO:0019512">
    <property type="term" value="P:lactose catabolic process via tagatose-6-phosphate"/>
    <property type="evidence" value="ECO:0007669"/>
    <property type="project" value="UniProtKB-UniRule"/>
</dbReference>
<dbReference type="GO" id="GO:0009052">
    <property type="term" value="P:pentose-phosphate shunt, non-oxidative branch"/>
    <property type="evidence" value="ECO:0007669"/>
    <property type="project" value="TreeGrafter"/>
</dbReference>
<dbReference type="Gene3D" id="3.40.1400.10">
    <property type="entry name" value="Sugar-phosphate isomerase, RpiB/LacA/LacB"/>
    <property type="match status" value="1"/>
</dbReference>
<dbReference type="HAMAP" id="MF_01555">
    <property type="entry name" value="LacA"/>
    <property type="match status" value="1"/>
</dbReference>
<dbReference type="InterPro" id="IPR004783">
    <property type="entry name" value="LacA"/>
</dbReference>
<dbReference type="InterPro" id="IPR003500">
    <property type="entry name" value="RpiB_LacA_LacB"/>
</dbReference>
<dbReference type="InterPro" id="IPR036569">
    <property type="entry name" value="RpiB_LacA_LacB_sf"/>
</dbReference>
<dbReference type="NCBIfam" id="TIGR01118">
    <property type="entry name" value="lacA"/>
    <property type="match status" value="1"/>
</dbReference>
<dbReference type="NCBIfam" id="NF006380">
    <property type="entry name" value="PRK08621.1"/>
    <property type="match status" value="1"/>
</dbReference>
<dbReference type="NCBIfam" id="TIGR00689">
    <property type="entry name" value="rpiB_lacA_lacB"/>
    <property type="match status" value="1"/>
</dbReference>
<dbReference type="PANTHER" id="PTHR30345:SF5">
    <property type="entry name" value="GALACTOSE-6-PHOSPHATE ISOMERASE SUBUNIT LACA"/>
    <property type="match status" value="1"/>
</dbReference>
<dbReference type="PANTHER" id="PTHR30345">
    <property type="entry name" value="RIBOSE-5-PHOSPHATE ISOMERASE B"/>
    <property type="match status" value="1"/>
</dbReference>
<dbReference type="Pfam" id="PF02502">
    <property type="entry name" value="LacAB_rpiB"/>
    <property type="match status" value="1"/>
</dbReference>
<dbReference type="PIRSF" id="PIRSF005384">
    <property type="entry name" value="RpiB_LacA_B"/>
    <property type="match status" value="1"/>
</dbReference>
<dbReference type="SUPFAM" id="SSF89623">
    <property type="entry name" value="Ribose/Galactose isomerase RpiB/AlsB"/>
    <property type="match status" value="1"/>
</dbReference>
<name>LACA_STRA1</name>
<keyword id="KW-0413">Isomerase</keyword>
<keyword id="KW-0423">Lactose metabolism</keyword>
<reference key="1">
    <citation type="journal article" date="2005" name="Proc. Natl. Acad. Sci. U.S.A.">
        <title>Genome analysis of multiple pathogenic isolates of Streptococcus agalactiae: implications for the microbial 'pan-genome'.</title>
        <authorList>
            <person name="Tettelin H."/>
            <person name="Masignani V."/>
            <person name="Cieslewicz M.J."/>
            <person name="Donati C."/>
            <person name="Medini D."/>
            <person name="Ward N.L."/>
            <person name="Angiuoli S.V."/>
            <person name="Crabtree J."/>
            <person name="Jones A.L."/>
            <person name="Durkin A.S."/>
            <person name="DeBoy R.T."/>
            <person name="Davidsen T.M."/>
            <person name="Mora M."/>
            <person name="Scarselli M."/>
            <person name="Margarit y Ros I."/>
            <person name="Peterson J.D."/>
            <person name="Hauser C.R."/>
            <person name="Sundaram J.P."/>
            <person name="Nelson W.C."/>
            <person name="Madupu R."/>
            <person name="Brinkac L.M."/>
            <person name="Dodson R.J."/>
            <person name="Rosovitz M.J."/>
            <person name="Sullivan S.A."/>
            <person name="Daugherty S.C."/>
            <person name="Haft D.H."/>
            <person name="Selengut J."/>
            <person name="Gwinn M.L."/>
            <person name="Zhou L."/>
            <person name="Zafar N."/>
            <person name="Khouri H."/>
            <person name="Radune D."/>
            <person name="Dimitrov G."/>
            <person name="Watkins K."/>
            <person name="O'Connor K.J."/>
            <person name="Smith S."/>
            <person name="Utterback T.R."/>
            <person name="White O."/>
            <person name="Rubens C.E."/>
            <person name="Grandi G."/>
            <person name="Madoff L.C."/>
            <person name="Kasper D.L."/>
            <person name="Telford J.L."/>
            <person name="Wessels M.R."/>
            <person name="Rappuoli R."/>
            <person name="Fraser C.M."/>
        </authorList>
    </citation>
    <scope>NUCLEOTIDE SEQUENCE [LARGE SCALE GENOMIC DNA]</scope>
    <source>
        <strain>ATCC 27591 / A909 / CDC SS700</strain>
    </source>
</reference>
<comment type="catalytic activity">
    <reaction evidence="1">
        <text>aldehydo-D-galactose 6-phosphate = keto-D-tagatose 6-phosphate</text>
        <dbReference type="Rhea" id="RHEA:13033"/>
        <dbReference type="ChEBI" id="CHEBI:58255"/>
        <dbReference type="ChEBI" id="CHEBI:134283"/>
        <dbReference type="EC" id="5.3.1.26"/>
    </reaction>
</comment>
<comment type="pathway">
    <text evidence="1">Carbohydrate metabolism; D-galactose 6-phosphate degradation; D-tagatose 6-phosphate from D-galactose 6-phosphate: step 1/1.</text>
</comment>
<comment type="subunit">
    <text evidence="1">Heteromultimeric protein consisting of LacA and LacB.</text>
</comment>
<comment type="similarity">
    <text evidence="1">Belongs to the LacAB/RpiB family.</text>
</comment>
<gene>
    <name evidence="1" type="primary">lacA</name>
    <name type="ordered locus">SAK_1890</name>
</gene>
<protein>
    <recommendedName>
        <fullName evidence="1">Galactose-6-phosphate isomerase subunit LacA</fullName>
        <ecNumber evidence="1">5.3.1.26</ecNumber>
    </recommendedName>
</protein>
<organism>
    <name type="scientific">Streptococcus agalactiae serotype Ia (strain ATCC 27591 / A909 / CDC SS700)</name>
    <dbReference type="NCBI Taxonomy" id="205921"/>
    <lineage>
        <taxon>Bacteria</taxon>
        <taxon>Bacillati</taxon>
        <taxon>Bacillota</taxon>
        <taxon>Bacilli</taxon>
        <taxon>Lactobacillales</taxon>
        <taxon>Streptococcaceae</taxon>
        <taxon>Streptococcus</taxon>
    </lineage>
</organism>